<reference key="1">
    <citation type="journal article" date="2000" name="Nature">
        <title>Sequence and analysis of chromosome 3 of the plant Arabidopsis thaliana.</title>
        <authorList>
            <person name="Salanoubat M."/>
            <person name="Lemcke K."/>
            <person name="Rieger M."/>
            <person name="Ansorge W."/>
            <person name="Unseld M."/>
            <person name="Fartmann B."/>
            <person name="Valle G."/>
            <person name="Bloecker H."/>
            <person name="Perez-Alonso M."/>
            <person name="Obermaier B."/>
            <person name="Delseny M."/>
            <person name="Boutry M."/>
            <person name="Grivell L.A."/>
            <person name="Mache R."/>
            <person name="Puigdomenech P."/>
            <person name="De Simone V."/>
            <person name="Choisne N."/>
            <person name="Artiguenave F."/>
            <person name="Robert C."/>
            <person name="Brottier P."/>
            <person name="Wincker P."/>
            <person name="Cattolico L."/>
            <person name="Weissenbach J."/>
            <person name="Saurin W."/>
            <person name="Quetier F."/>
            <person name="Schaefer M."/>
            <person name="Mueller-Auer S."/>
            <person name="Gabel C."/>
            <person name="Fuchs M."/>
            <person name="Benes V."/>
            <person name="Wurmbach E."/>
            <person name="Drzonek H."/>
            <person name="Erfle H."/>
            <person name="Jordan N."/>
            <person name="Bangert S."/>
            <person name="Wiedelmann R."/>
            <person name="Kranz H."/>
            <person name="Voss H."/>
            <person name="Holland R."/>
            <person name="Brandt P."/>
            <person name="Nyakatura G."/>
            <person name="Vezzi A."/>
            <person name="D'Angelo M."/>
            <person name="Pallavicini A."/>
            <person name="Toppo S."/>
            <person name="Simionati B."/>
            <person name="Conrad A."/>
            <person name="Hornischer K."/>
            <person name="Kauer G."/>
            <person name="Loehnert T.-H."/>
            <person name="Nordsiek G."/>
            <person name="Reichelt J."/>
            <person name="Scharfe M."/>
            <person name="Schoen O."/>
            <person name="Bargues M."/>
            <person name="Terol J."/>
            <person name="Climent J."/>
            <person name="Navarro P."/>
            <person name="Collado C."/>
            <person name="Perez-Perez A."/>
            <person name="Ottenwaelder B."/>
            <person name="Duchemin D."/>
            <person name="Cooke R."/>
            <person name="Laudie M."/>
            <person name="Berger-Llauro C."/>
            <person name="Purnelle B."/>
            <person name="Masuy D."/>
            <person name="de Haan M."/>
            <person name="Maarse A.C."/>
            <person name="Alcaraz J.-P."/>
            <person name="Cottet A."/>
            <person name="Casacuberta E."/>
            <person name="Monfort A."/>
            <person name="Argiriou A."/>
            <person name="Flores M."/>
            <person name="Liguori R."/>
            <person name="Vitale D."/>
            <person name="Mannhaupt G."/>
            <person name="Haase D."/>
            <person name="Schoof H."/>
            <person name="Rudd S."/>
            <person name="Zaccaria P."/>
            <person name="Mewes H.-W."/>
            <person name="Mayer K.F.X."/>
            <person name="Kaul S."/>
            <person name="Town C.D."/>
            <person name="Koo H.L."/>
            <person name="Tallon L.J."/>
            <person name="Jenkins J."/>
            <person name="Rooney T."/>
            <person name="Rizzo M."/>
            <person name="Walts A."/>
            <person name="Utterback T."/>
            <person name="Fujii C.Y."/>
            <person name="Shea T.P."/>
            <person name="Creasy T.H."/>
            <person name="Haas B."/>
            <person name="Maiti R."/>
            <person name="Wu D."/>
            <person name="Peterson J."/>
            <person name="Van Aken S."/>
            <person name="Pai G."/>
            <person name="Militscher J."/>
            <person name="Sellers P."/>
            <person name="Gill J.E."/>
            <person name="Feldblyum T.V."/>
            <person name="Preuss D."/>
            <person name="Lin X."/>
            <person name="Nierman W.C."/>
            <person name="Salzberg S.L."/>
            <person name="White O."/>
            <person name="Venter J.C."/>
            <person name="Fraser C.M."/>
            <person name="Kaneko T."/>
            <person name="Nakamura Y."/>
            <person name="Sato S."/>
            <person name="Kato T."/>
            <person name="Asamizu E."/>
            <person name="Sasamoto S."/>
            <person name="Kimura T."/>
            <person name="Idesawa K."/>
            <person name="Kawashima K."/>
            <person name="Kishida Y."/>
            <person name="Kiyokawa C."/>
            <person name="Kohara M."/>
            <person name="Matsumoto M."/>
            <person name="Matsuno A."/>
            <person name="Muraki A."/>
            <person name="Nakayama S."/>
            <person name="Nakazaki N."/>
            <person name="Shinpo S."/>
            <person name="Takeuchi C."/>
            <person name="Wada T."/>
            <person name="Watanabe A."/>
            <person name="Yamada M."/>
            <person name="Yasuda M."/>
            <person name="Tabata S."/>
        </authorList>
    </citation>
    <scope>NUCLEOTIDE SEQUENCE [LARGE SCALE GENOMIC DNA]</scope>
    <source>
        <strain>cv. Columbia</strain>
    </source>
</reference>
<reference key="2">
    <citation type="journal article" date="2017" name="Plant J.">
        <title>Araport11: a complete reannotation of the Arabidopsis thaliana reference genome.</title>
        <authorList>
            <person name="Cheng C.Y."/>
            <person name="Krishnakumar V."/>
            <person name="Chan A.P."/>
            <person name="Thibaud-Nissen F."/>
            <person name="Schobel S."/>
            <person name="Town C.D."/>
        </authorList>
    </citation>
    <scope>GENOME REANNOTATION</scope>
    <source>
        <strain>cv. Columbia</strain>
    </source>
</reference>
<reference key="3">
    <citation type="journal article" date="2003" name="Science">
        <title>Empirical analysis of transcriptional activity in the Arabidopsis genome.</title>
        <authorList>
            <person name="Yamada K."/>
            <person name="Lim J."/>
            <person name="Dale J.M."/>
            <person name="Chen H."/>
            <person name="Shinn P."/>
            <person name="Palm C.J."/>
            <person name="Southwick A.M."/>
            <person name="Wu H.C."/>
            <person name="Kim C.J."/>
            <person name="Nguyen M."/>
            <person name="Pham P.K."/>
            <person name="Cheuk R.F."/>
            <person name="Karlin-Newmann G."/>
            <person name="Liu S.X."/>
            <person name="Lam B."/>
            <person name="Sakano H."/>
            <person name="Wu T."/>
            <person name="Yu G."/>
            <person name="Miranda M."/>
            <person name="Quach H.L."/>
            <person name="Tripp M."/>
            <person name="Chang C.H."/>
            <person name="Lee J.M."/>
            <person name="Toriumi M.J."/>
            <person name="Chan M.M."/>
            <person name="Tang C.C."/>
            <person name="Onodera C.S."/>
            <person name="Deng J.M."/>
            <person name="Akiyama K."/>
            <person name="Ansari Y."/>
            <person name="Arakawa T."/>
            <person name="Banh J."/>
            <person name="Banno F."/>
            <person name="Bowser L."/>
            <person name="Brooks S.Y."/>
            <person name="Carninci P."/>
            <person name="Chao Q."/>
            <person name="Choy N."/>
            <person name="Enju A."/>
            <person name="Goldsmith A.D."/>
            <person name="Gurjal M."/>
            <person name="Hansen N.F."/>
            <person name="Hayashizaki Y."/>
            <person name="Johnson-Hopson C."/>
            <person name="Hsuan V.W."/>
            <person name="Iida K."/>
            <person name="Karnes M."/>
            <person name="Khan S."/>
            <person name="Koesema E."/>
            <person name="Ishida J."/>
            <person name="Jiang P.X."/>
            <person name="Jones T."/>
            <person name="Kawai J."/>
            <person name="Kamiya A."/>
            <person name="Meyers C."/>
            <person name="Nakajima M."/>
            <person name="Narusaka M."/>
            <person name="Seki M."/>
            <person name="Sakurai T."/>
            <person name="Satou M."/>
            <person name="Tamse R."/>
            <person name="Vaysberg M."/>
            <person name="Wallender E.K."/>
            <person name="Wong C."/>
            <person name="Yamamura Y."/>
            <person name="Yuan S."/>
            <person name="Shinozaki K."/>
            <person name="Davis R.W."/>
            <person name="Theologis A."/>
            <person name="Ecker J.R."/>
        </authorList>
    </citation>
    <scope>NUCLEOTIDE SEQUENCE [LARGE SCALE MRNA]</scope>
    <source>
        <strain>cv. Columbia</strain>
    </source>
</reference>
<reference key="4">
    <citation type="journal article" date="1997" name="Trends Cell Biol.">
        <title>A consensus nomenclature for the protein-import components of the chloroplast envelope.</title>
        <authorList>
            <person name="Schnell D.J."/>
            <person name="Blobel G."/>
            <person name="Keegstra K."/>
            <person name="Kessler F."/>
            <person name="Ko K."/>
            <person name="Soll J."/>
        </authorList>
    </citation>
    <scope>NOMENCLATURE</scope>
</reference>
<reference key="5">
    <citation type="journal article" date="2001" name="Plant Cell">
        <title>Leaf-specific upregulation of chloroplast translocon genes by a CCT motif-containing protein, CIA2.</title>
        <authorList>
            <person name="Sun C.-W."/>
            <person name="Chen L.-J."/>
            <person name="Lin L.-C."/>
            <person name="Li H.-M."/>
        </authorList>
    </citation>
    <scope>INDUCTION</scope>
</reference>
<reference key="6">
    <citation type="journal article" date="2003" name="J. Cell Biol.">
        <title>Characterization of the translocon of the outer envelope of chloroplasts.</title>
        <authorList>
            <person name="Schleiff E."/>
            <person name="Soll J."/>
            <person name="Kuechler M."/>
            <person name="Kuehlbrandt W."/>
            <person name="Harrer R."/>
        </authorList>
    </citation>
    <scope>TOC CORE COMPLEX COMPOSITION AND ARCHITECTURE</scope>
</reference>
<reference key="7">
    <citation type="journal article" date="2003" name="Mol. Cell. Proteomics">
        <title>Proteomics of the chloroplast envelope membranes from Arabidopsis thaliana.</title>
        <authorList>
            <person name="Ferro M."/>
            <person name="Salvi D."/>
            <person name="Brugiere S."/>
            <person name="Miras S."/>
            <person name="Kowalski S."/>
            <person name="Louwagie M."/>
            <person name="Garin J."/>
            <person name="Joyard J."/>
            <person name="Rolland N."/>
        </authorList>
    </citation>
    <scope>IDENTIFICATION BY MASS SPECTROMETRY</scope>
    <scope>SUBCELLULAR LOCATION [LARGE SCALE ANALYSIS]</scope>
    <source>
        <strain>cv. Wassilewskija</strain>
    </source>
</reference>
<reference key="8">
    <citation type="journal article" date="2003" name="Plant J.">
        <title>A polyglycine stretch is necessary for proper targeting of the protein translocation channel precursor to the outer envelope membrane of chloroplasts.</title>
        <authorList>
            <person name="Inoue K."/>
            <person name="Keegstra K."/>
        </authorList>
    </citation>
    <scope>PROTEOLYTIC PROCESSING</scope>
</reference>
<reference key="9">
    <citation type="journal article" date="2004" name="Mol. Biol. Cell">
        <title>Members of the Toc159 import receptor family represent distinct pathways for protein targeting to plastids.</title>
        <authorList>
            <person name="Ivanova Y."/>
            <person name="Smith M.D."/>
            <person name="Chen K."/>
            <person name="Schnell D.J."/>
        </authorList>
    </citation>
    <scope>SUBCELLULAR LOCATION</scope>
    <scope>DEVELOPMENTAL STAGE</scope>
    <scope>INTERACTION WITH TOC132; TOC120 AND TOC159</scope>
</reference>
<reference key="10">
    <citation type="journal article" date="2005" name="Plant Physiol.">
        <title>A molecular-genetic study of the Arabidopsis toc75 gene family.</title>
        <authorList>
            <person name="Baldwin A."/>
            <person name="Wardle A."/>
            <person name="Patel R."/>
            <person name="Dudley P."/>
            <person name="Park S.K."/>
            <person name="Twell D."/>
            <person name="Inoue K."/>
            <person name="Jarvis P."/>
        </authorList>
    </citation>
    <scope>FUNCTION</scope>
    <scope>DISRUPTION PHENOTYPE</scope>
    <scope>TISSUE SPECIFICITY</scope>
    <scope>TRANSMEMBRANE DOMAINS</scope>
    <source>
        <strain>cv. Columbia</strain>
        <tissue>Seedling</tissue>
    </source>
</reference>
<reference key="11">
    <citation type="journal article" date="2012" name="Science">
        <title>Chloroplast biogenesis is regulated by direct action of the ubiquitin-proteasome system.</title>
        <authorList>
            <person name="Ling Q."/>
            <person name="Huang W."/>
            <person name="Baldwin A."/>
            <person name="Jarvis P."/>
        </authorList>
    </citation>
    <scope>INTERACTION WITH SP1</scope>
</reference>
<reference key="12">
    <citation type="journal article" date="2018" name="Nature">
        <title>TIC236 links the outer and inner membrane translocons of the chloroplast.</title>
        <authorList>
            <person name="Chen Y.L."/>
            <person name="Chen L.J."/>
            <person name="Chu C.C."/>
            <person name="Huang P.K."/>
            <person name="Wen J.R."/>
            <person name="Li H.M."/>
        </authorList>
    </citation>
    <scope>INTERACTION WITH TIC236</scope>
</reference>
<reference key="13">
    <citation type="journal article" date="2017" name="Proc. Natl. Acad. Sci. U.S.A.">
        <title>The POTRA domains of Toc75 exhibit chaperone-like function to facilitate import into chloroplasts.</title>
        <authorList>
            <person name="O'Neil P.K."/>
            <person name="Richardson L.G.L."/>
            <person name="Paila Y.D."/>
            <person name="Piszczek G."/>
            <person name="Chakravarthy S."/>
            <person name="Noinaj N."/>
            <person name="Schnell D."/>
        </authorList>
    </citation>
    <scope>X-RAY CRYSTALLOGRAPHY (2.50 ANGSTROMS) OF 141-449</scope>
    <scope>DOMAIN POTRA</scope>
</reference>
<sequence length="818" mass="89189">MAAFSVNGQLIPTATSSTASTSLSSRRKFLSPSSSRLPRISTQSPRVPSIKCSKSLPNRDTETSSKDSLLKNLAKPLAVASVSSAASFFLFRISNLPSVLTGGGGGGDGNFGGFGGGGGGGDGNDGGFWGKLFSPSPAVADEEQSPDWDSHGLPANIVVQLNKLSGFKKYKVSDIMFFDRRRQTTIGTEDSFFEMVSIRPGGVYTKAQLQKELETLATCGMFEKVDLEGKTKPDGTLGVTISFAESTWQSADRFRCINVGLMVQSKPIEMDSDMTDKEKLEYYRSLEKDYKRRIDRARPCLLPAPVYGEVMQMLRDQGKVSARLLQRIRDRVQKWYHDEGYACAQVVNFGNLNTKEVVCEVVEGDITQLVIQFQDKLGNVVEGNTQVPVVRRELPKQLRQGYVFNIEAGKKALSNINSLGLFSNIEVNPRPDEKNEGGIIVEIKLKELEQKSAEVSTEWSIVPGRGGAPTLASFQPGGSVTFEHRNLQGLNRSLMGSVTTSNFLNPQDDLSFKLEYVHPYLDGVYNPRNRTFKTSCFNSRKLSPVFTGGPGVEEVPPIWVDRAGVKANITENFTRQSKFTYGLVMEEITTRDESSHIAANGQRLLPSGGISADGPPTTLSGTGVDRMAFLQANITRDNTKFVNGAVVGQRTVFQVDQGLGIGSKFPFFNRHQLTMTKFIQLREVEQGAGKSPPPVLVLHGHYGGCVGDLPSYDAFVLGGPYSVRGYNMGELGAARNIAEVGAEIRIPVKNTHVYAFVEHGNDLGSSKDVKGNPTAVYRRTGQGSSYGAGVKLGLVRAEYAVDHNNGTGALFFRFGERY</sequence>
<gene>
    <name evidence="10" type="primary">TOC75-3</name>
    <name evidence="11" type="synonym">TOC75</name>
    <name type="ordered locus">At3g46740</name>
    <name type="ORF">T6H20.230</name>
</gene>
<accession>Q9STE8</accession>
<organism>
    <name type="scientific">Arabidopsis thaliana</name>
    <name type="common">Mouse-ear cress</name>
    <dbReference type="NCBI Taxonomy" id="3702"/>
    <lineage>
        <taxon>Eukaryota</taxon>
        <taxon>Viridiplantae</taxon>
        <taxon>Streptophyta</taxon>
        <taxon>Embryophyta</taxon>
        <taxon>Tracheophyta</taxon>
        <taxon>Spermatophyta</taxon>
        <taxon>Magnoliopsida</taxon>
        <taxon>eudicotyledons</taxon>
        <taxon>Gunneridae</taxon>
        <taxon>Pentapetalae</taxon>
        <taxon>rosids</taxon>
        <taxon>malvids</taxon>
        <taxon>Brassicales</taxon>
        <taxon>Brassicaceae</taxon>
        <taxon>Camelineae</taxon>
        <taxon>Arabidopsis</taxon>
    </lineage>
</organism>
<comment type="function">
    <text evidence="1 7">Essential protein. Mediates the insertion of proteins targeted to the outer membrane of chloroplasts (By similarity). Required for the import of protein precursors into chloroplasts. Forms the voltage-dependent preprotein translocation channels (hydrophilic beta barrel) of the TOC complex in the chloroplastic outer membrane.</text>
</comment>
<comment type="subunit">
    <text evidence="6 8 9">Part of the TOC core complex that includes a protein for the specific recognition of transit peptides surrounded by a ring composed of four proteins forming translocation channels, and four to five GTP-binding proteins providing energy. This core complex can interact with components of the TIC complex to form a larger import complex. Chloroplastic protein precursors such as prSS (precursor of the RuBisCO small subunit) also interact with these complexes. The TOC complex contains a specific subset of polar lipids such as digalactosyldiacylglyceride (DGDG), phosphatidylcholine (PC) and phosphatidylglycerol (PG). TOC75-3 interacts with TOC34/OEP34, TOC159/TOC86, TOC132 and TOC120 (PubMed:15090618). Interacts with SP1 (PubMed:23118188). Interacts with TIC236 (PubMed:30464337).</text>
</comment>
<comment type="interaction">
    <interactant intactId="EBI-639078">
        <id>Q9STE8</id>
    </interactant>
    <interactant intactId="EBI-6559199">
        <id>Q8L7N4</id>
        <label>SP1</label>
    </interactant>
    <organismsDiffer>false</organismsDiffer>
    <experiments>2</experiments>
</comment>
<comment type="subcellular location">
    <subcellularLocation>
        <location evidence="5 6">Plastid</location>
        <location evidence="5 6">Chloroplast outer membrane</location>
        <topology evidence="5 6">Multi-pass membrane protein</topology>
    </subcellularLocation>
</comment>
<comment type="tissue specificity">
    <text evidence="7">Mostly expressed in young and actively dividing photosynthetic tissues and, to a lower extent, in old leaves and roots. Particularly low levels in leaves after etiolation.</text>
</comment>
<comment type="developmental stage">
    <text evidence="6">Expressed predominantly during the early stages of plant growth, peaking at three weeks after germination (at protein level).</text>
</comment>
<comment type="induction">
    <text evidence="4">Up-regulated by CIA2 in leaves.</text>
</comment>
<comment type="domain">
    <text evidence="13 14">Contains 3 N-terminal periplasmic polypeptide transport-associated (POTRA) domains which may serve as a binding site for the preprotein in the chloroplast intermembrane space, and provide a chaperone-like activity to prevent misfolding or aggregation in the intermembrane space (Probable). Transmembrane regions consist mainly of membrane-spanning sided beta-sheets, which are not predicted by sequence analysis tools (Probable).</text>
</comment>
<comment type="disruption phenotype">
    <text evidence="7">Plants have an embryo development arrested at the two cells stage.</text>
</comment>
<comment type="similarity">
    <text evidence="12">Belongs to the TOC75 family.</text>
</comment>
<evidence type="ECO:0000250" key="1"/>
<evidence type="ECO:0000255" key="2"/>
<evidence type="ECO:0000256" key="3">
    <source>
        <dbReference type="SAM" id="MobiDB-lite"/>
    </source>
</evidence>
<evidence type="ECO:0000269" key="4">
    <source>
    </source>
</evidence>
<evidence type="ECO:0000269" key="5">
    <source>
    </source>
</evidence>
<evidence type="ECO:0000269" key="6">
    <source>
    </source>
</evidence>
<evidence type="ECO:0000269" key="7">
    <source>
    </source>
</evidence>
<evidence type="ECO:0000269" key="8">
    <source>
    </source>
</evidence>
<evidence type="ECO:0000269" key="9">
    <source>
    </source>
</evidence>
<evidence type="ECO:0000303" key="10">
    <source>
    </source>
</evidence>
<evidence type="ECO:0000303" key="11">
    <source>
    </source>
</evidence>
<evidence type="ECO:0000305" key="12"/>
<evidence type="ECO:0000305" key="13">
    <source>
    </source>
</evidence>
<evidence type="ECO:0000305" key="14">
    <source>
    </source>
</evidence>
<evidence type="ECO:0007829" key="15">
    <source>
        <dbReference type="PDB" id="5UAY"/>
    </source>
</evidence>
<evidence type="ECO:0007829" key="16">
    <source>
        <dbReference type="PDB" id="5UBC"/>
    </source>
</evidence>
<evidence type="ECO:0007829" key="17">
    <source>
        <dbReference type="PDB" id="8DN6"/>
    </source>
</evidence>
<proteinExistence type="evidence at protein level"/>
<protein>
    <recommendedName>
        <fullName evidence="12">Protein TOC75-3, chloroplastic</fullName>
    </recommendedName>
    <alternativeName>
        <fullName evidence="10">75 kDa translocon at the outer-envelope-membrane of chloroplasts 3</fullName>
        <shortName evidence="10">AtTOC75-III</shortName>
    </alternativeName>
</protein>
<keyword id="KW-0002">3D-structure</keyword>
<keyword id="KW-0150">Chloroplast</keyword>
<keyword id="KW-0472">Membrane</keyword>
<keyword id="KW-0934">Plastid</keyword>
<keyword id="KW-1002">Plastid outer membrane</keyword>
<keyword id="KW-0653">Protein transport</keyword>
<keyword id="KW-1185">Reference proteome</keyword>
<keyword id="KW-0809">Transit peptide</keyword>
<keyword id="KW-0812">Transmembrane</keyword>
<keyword id="KW-1134">Transmembrane beta strand</keyword>
<keyword id="KW-0813">Transport</keyword>
<dbReference type="EMBL" id="AL096859">
    <property type="protein sequence ID" value="CAB51191.1"/>
    <property type="molecule type" value="Genomic_DNA"/>
</dbReference>
<dbReference type="EMBL" id="CP002686">
    <property type="protein sequence ID" value="AEE78199.1"/>
    <property type="molecule type" value="Genomic_DNA"/>
</dbReference>
<dbReference type="EMBL" id="AY127014">
    <property type="protein sequence ID" value="AAM83239.1"/>
    <property type="molecule type" value="mRNA"/>
</dbReference>
<dbReference type="EMBL" id="BT006358">
    <property type="protein sequence ID" value="AAP21166.1"/>
    <property type="molecule type" value="mRNA"/>
</dbReference>
<dbReference type="PIR" id="T12975">
    <property type="entry name" value="T12975"/>
</dbReference>
<dbReference type="PDB" id="5UAY">
    <property type="method" value="X-ray"/>
    <property type="resolution" value="2.50 A"/>
    <property type="chains" value="A=141-449"/>
</dbReference>
<dbReference type="PDB" id="5UBC">
    <property type="method" value="X-ray"/>
    <property type="resolution" value="2.86 A"/>
    <property type="chains" value="A/B=141-449"/>
</dbReference>
<dbReference type="PDB" id="8DN6">
    <property type="method" value="X-ray"/>
    <property type="resolution" value="3.00 A"/>
    <property type="chains" value="A/B=141-449"/>
</dbReference>
<dbReference type="PDBsum" id="5UAY"/>
<dbReference type="PDBsum" id="5UBC"/>
<dbReference type="PDBsum" id="8DN6"/>
<dbReference type="SASBDB" id="Q9STE8"/>
<dbReference type="SMR" id="Q9STE8"/>
<dbReference type="BioGRID" id="9147">
    <property type="interactions" value="6"/>
</dbReference>
<dbReference type="FunCoup" id="Q9STE8">
    <property type="interactions" value="1048"/>
</dbReference>
<dbReference type="IntAct" id="Q9STE8">
    <property type="interactions" value="3"/>
</dbReference>
<dbReference type="STRING" id="3702.Q9STE8"/>
<dbReference type="iPTMnet" id="Q9STE8"/>
<dbReference type="PaxDb" id="3702-AT3G46740.1"/>
<dbReference type="ProteomicsDB" id="246468"/>
<dbReference type="EnsemblPlants" id="AT3G46740.1">
    <property type="protein sequence ID" value="AT3G46740.1"/>
    <property type="gene ID" value="AT3G46740"/>
</dbReference>
<dbReference type="Gramene" id="AT3G46740.1">
    <property type="protein sequence ID" value="AT3G46740.1"/>
    <property type="gene ID" value="AT3G46740"/>
</dbReference>
<dbReference type="KEGG" id="ath:AT3G46740"/>
<dbReference type="Araport" id="AT3G46740"/>
<dbReference type="TAIR" id="AT3G46740">
    <property type="gene designation" value="TOC75-III"/>
</dbReference>
<dbReference type="eggNOG" id="ENOG502QTZ3">
    <property type="taxonomic scope" value="Eukaryota"/>
</dbReference>
<dbReference type="HOGENOM" id="CLU_000837_26_1_1"/>
<dbReference type="InParanoid" id="Q9STE8"/>
<dbReference type="OMA" id="VSDIMFF"/>
<dbReference type="PhylomeDB" id="Q9STE8"/>
<dbReference type="CD-CODE" id="4299E36E">
    <property type="entry name" value="Nucleolus"/>
</dbReference>
<dbReference type="PRO" id="PR:Q9STE8"/>
<dbReference type="Proteomes" id="UP000006548">
    <property type="component" value="Chromosome 3"/>
</dbReference>
<dbReference type="ExpressionAtlas" id="Q9STE8">
    <property type="expression patterns" value="baseline and differential"/>
</dbReference>
<dbReference type="GO" id="GO:0009507">
    <property type="term" value="C:chloroplast"/>
    <property type="evidence" value="ECO:0007005"/>
    <property type="project" value="TAIR"/>
</dbReference>
<dbReference type="GO" id="GO:0009941">
    <property type="term" value="C:chloroplast envelope"/>
    <property type="evidence" value="ECO:0007005"/>
    <property type="project" value="TAIR"/>
</dbReference>
<dbReference type="GO" id="GO:0005829">
    <property type="term" value="C:cytosol"/>
    <property type="evidence" value="ECO:0007005"/>
    <property type="project" value="TAIR"/>
</dbReference>
<dbReference type="GO" id="GO:0000325">
    <property type="term" value="C:plant-type vacuole"/>
    <property type="evidence" value="ECO:0007005"/>
    <property type="project" value="TAIR"/>
</dbReference>
<dbReference type="GO" id="GO:0009536">
    <property type="term" value="C:plastid"/>
    <property type="evidence" value="ECO:0007005"/>
    <property type="project" value="TAIR"/>
</dbReference>
<dbReference type="GO" id="GO:0010006">
    <property type="term" value="C:Toc complex"/>
    <property type="evidence" value="ECO:0000250"/>
    <property type="project" value="TAIR"/>
</dbReference>
<dbReference type="GO" id="GO:0061927">
    <property type="term" value="C:TOC-TIC supercomplex I"/>
    <property type="evidence" value="ECO:0000314"/>
    <property type="project" value="TAIR"/>
</dbReference>
<dbReference type="GO" id="GO:0015450">
    <property type="term" value="F:protein-transporting ATPase activity"/>
    <property type="evidence" value="ECO:0007669"/>
    <property type="project" value="InterPro"/>
</dbReference>
<dbReference type="GO" id="GO:0009658">
    <property type="term" value="P:chloroplast organization"/>
    <property type="evidence" value="ECO:0000315"/>
    <property type="project" value="TAIR"/>
</dbReference>
<dbReference type="GO" id="GO:0048598">
    <property type="term" value="P:embryonic morphogenesis"/>
    <property type="evidence" value="ECO:0000315"/>
    <property type="project" value="TAIR"/>
</dbReference>
<dbReference type="GO" id="GO:0006886">
    <property type="term" value="P:intracellular protein transport"/>
    <property type="evidence" value="ECO:0007669"/>
    <property type="project" value="InterPro"/>
</dbReference>
<dbReference type="GO" id="GO:0045037">
    <property type="term" value="P:protein import into chloroplast stroma"/>
    <property type="evidence" value="ECO:0000315"/>
    <property type="project" value="TAIR"/>
</dbReference>
<dbReference type="GO" id="GO:0045036">
    <property type="term" value="P:protein targeting to chloroplast"/>
    <property type="evidence" value="ECO:0000314"/>
    <property type="project" value="TAIR"/>
</dbReference>
<dbReference type="FunFam" id="2.40.160.50:FF:000004">
    <property type="entry name" value="Protein TOC75-3 chloroplastic"/>
    <property type="match status" value="1"/>
</dbReference>
<dbReference type="FunFam" id="3.10.20.310:FF:000011">
    <property type="entry name" value="Protein TOC75-3 chloroplastic"/>
    <property type="match status" value="1"/>
</dbReference>
<dbReference type="FunFam" id="3.10.20.310:FF:000019">
    <property type="entry name" value="Protein TOC75-3, chloroplastic isoform A"/>
    <property type="match status" value="1"/>
</dbReference>
<dbReference type="Gene3D" id="3.10.20.310">
    <property type="entry name" value="membrane protein fhac"/>
    <property type="match status" value="2"/>
</dbReference>
<dbReference type="Gene3D" id="2.40.160.50">
    <property type="entry name" value="membrane protein fhac: a member of the omp85/tpsb transporter family"/>
    <property type="match status" value="1"/>
</dbReference>
<dbReference type="InterPro" id="IPR000184">
    <property type="entry name" value="Bac_surfAg_D15"/>
</dbReference>
<dbReference type="InterPro" id="IPR039910">
    <property type="entry name" value="D15-like"/>
</dbReference>
<dbReference type="InterPro" id="IPR005689">
    <property type="entry name" value="IAP75"/>
</dbReference>
<dbReference type="NCBIfam" id="TIGR00992">
    <property type="entry name" value="3a0901s03IAP75"/>
    <property type="match status" value="1"/>
</dbReference>
<dbReference type="PANTHER" id="PTHR12815:SF42">
    <property type="entry name" value="BACTERIAL SURFACE ANTIGEN (D15) DOMAIN-CONTAINING PROTEIN"/>
    <property type="match status" value="1"/>
</dbReference>
<dbReference type="PANTHER" id="PTHR12815">
    <property type="entry name" value="SORTING AND ASSEMBLY MACHINERY SAMM50 PROTEIN FAMILY MEMBER"/>
    <property type="match status" value="1"/>
</dbReference>
<dbReference type="Pfam" id="PF01103">
    <property type="entry name" value="Omp85"/>
    <property type="match status" value="1"/>
</dbReference>
<dbReference type="Pfam" id="PF25282">
    <property type="entry name" value="POTRA1_3_Toc75"/>
    <property type="match status" value="2"/>
</dbReference>
<dbReference type="Pfam" id="PF25280">
    <property type="entry name" value="POTRA2_Toc75"/>
    <property type="match status" value="1"/>
</dbReference>
<name>TC753_ARATH</name>
<feature type="transit peptide" description="Chloroplast" evidence="2">
    <location>
        <begin position="1"/>
        <end position="79"/>
    </location>
</feature>
<feature type="transit peptide" description="Chloroplast; outer membrane" evidence="2">
    <location>
        <begin position="80"/>
        <end position="140"/>
    </location>
</feature>
<feature type="chain" id="PRO_0000042821" description="Protein TOC75-3, chloroplastic">
    <location>
        <begin position="141"/>
        <end position="818"/>
    </location>
</feature>
<feature type="topological domain" description="Chloroplast intermembrane" evidence="14">
    <location>
        <begin position="141"/>
        <end position="473"/>
    </location>
</feature>
<feature type="transmembrane region" description="Beta stranded" evidence="2">
    <location>
        <begin position="474"/>
        <end position="482"/>
    </location>
</feature>
<feature type="topological domain" description="Cytoplasmic" evidence="2">
    <location>
        <begin position="483"/>
        <end position="509"/>
    </location>
</feature>
<feature type="transmembrane region" description="Beta stranded" evidence="2">
    <location>
        <begin position="510"/>
        <end position="518"/>
    </location>
</feature>
<feature type="topological domain" description="Chloroplast intermembrane" evidence="2">
    <location>
        <begin position="519"/>
        <end position="562"/>
    </location>
</feature>
<feature type="transmembrane region" description="Beta stranded" evidence="2">
    <location>
        <begin position="563"/>
        <end position="570"/>
    </location>
</feature>
<feature type="topological domain" description="Cytoplasmic" evidence="2">
    <location>
        <begin position="571"/>
        <end position="578"/>
    </location>
</feature>
<feature type="transmembrane region" description="Beta stranded" evidence="2">
    <location>
        <begin position="579"/>
        <end position="586"/>
    </location>
</feature>
<feature type="topological domain" description="Chloroplast intermembrane" evidence="2">
    <location>
        <begin position="587"/>
        <end position="693"/>
    </location>
</feature>
<feature type="transmembrane region" description="Beta stranded" evidence="2">
    <location>
        <begin position="694"/>
        <end position="702"/>
    </location>
</feature>
<feature type="topological domain" description="Cytoplasmic" evidence="2">
    <location>
        <begin position="703"/>
        <end position="714"/>
    </location>
</feature>
<feature type="transmembrane region" description="Beta stranded" evidence="2">
    <location>
        <begin position="715"/>
        <end position="723"/>
    </location>
</feature>
<feature type="topological domain" description="Chloroplast intermembrane" evidence="2">
    <location>
        <begin position="724"/>
        <end position="785"/>
    </location>
</feature>
<feature type="transmembrane region" description="Beta stranded" evidence="2">
    <location>
        <begin position="786"/>
        <end position="792"/>
    </location>
</feature>
<feature type="topological domain" description="Cytoplasmic" evidence="2">
    <location>
        <begin position="793"/>
        <end position="806"/>
    </location>
</feature>
<feature type="transmembrane region" description="Beta stranded" evidence="2">
    <location>
        <begin position="807"/>
        <end position="814"/>
    </location>
</feature>
<feature type="topological domain" description="Chloroplast intermembrane" evidence="2">
    <location>
        <begin position="815"/>
        <end position="818"/>
    </location>
</feature>
<feature type="domain" description="POTRA 1" evidence="14">
    <location>
        <begin position="141"/>
        <end position="246"/>
    </location>
</feature>
<feature type="domain" description="POTRA 2" evidence="14">
    <location>
        <begin position="247"/>
        <end position="364"/>
    </location>
</feature>
<feature type="domain" description="POTRA 3" evidence="14">
    <location>
        <begin position="365"/>
        <end position="448"/>
    </location>
</feature>
<feature type="region of interest" description="Disordered" evidence="3">
    <location>
        <begin position="15"/>
        <end position="67"/>
    </location>
</feature>
<feature type="compositionally biased region" description="Low complexity" evidence="3">
    <location>
        <begin position="15"/>
        <end position="41"/>
    </location>
</feature>
<feature type="compositionally biased region" description="Basic and acidic residues" evidence="3">
    <location>
        <begin position="57"/>
        <end position="67"/>
    </location>
</feature>
<feature type="strand" evidence="15">
    <location>
        <begin position="155"/>
        <end position="158"/>
    </location>
</feature>
<feature type="strand" evidence="15">
    <location>
        <begin position="170"/>
        <end position="179"/>
    </location>
</feature>
<feature type="turn" evidence="15">
    <location>
        <begin position="180"/>
        <end position="183"/>
    </location>
</feature>
<feature type="strand" evidence="15">
    <location>
        <begin position="184"/>
        <end position="186"/>
    </location>
</feature>
<feature type="helix" evidence="15">
    <location>
        <begin position="188"/>
        <end position="190"/>
    </location>
</feature>
<feature type="helix" evidence="15">
    <location>
        <begin position="193"/>
        <end position="195"/>
    </location>
</feature>
<feature type="strand" evidence="15">
    <location>
        <begin position="202"/>
        <end position="204"/>
    </location>
</feature>
<feature type="helix" evidence="15">
    <location>
        <begin position="206"/>
        <end position="218"/>
    </location>
</feature>
<feature type="strand" evidence="15">
    <location>
        <begin position="219"/>
        <end position="231"/>
    </location>
</feature>
<feature type="strand" evidence="15">
    <location>
        <begin position="233"/>
        <end position="235"/>
    </location>
</feature>
<feature type="strand" evidence="15">
    <location>
        <begin position="237"/>
        <end position="245"/>
    </location>
</feature>
<feature type="strand" evidence="15">
    <location>
        <begin position="252"/>
        <end position="258"/>
    </location>
</feature>
<feature type="helix" evidence="15">
    <location>
        <begin position="276"/>
        <end position="296"/>
    </location>
</feature>
<feature type="strand" evidence="17">
    <location>
        <begin position="297"/>
        <end position="299"/>
    </location>
</feature>
<feature type="helix" evidence="15">
    <location>
        <begin position="304"/>
        <end position="317"/>
    </location>
</feature>
<feature type="helix" evidence="15">
    <location>
        <begin position="322"/>
        <end position="338"/>
    </location>
</feature>
<feature type="strand" evidence="15">
    <location>
        <begin position="345"/>
        <end position="350"/>
    </location>
</feature>
<feature type="strand" evidence="15">
    <location>
        <begin position="356"/>
        <end position="362"/>
    </location>
</feature>
<feature type="strand" evidence="15">
    <location>
        <begin position="365"/>
        <end position="374"/>
    </location>
</feature>
<feature type="turn" evidence="15">
    <location>
        <begin position="376"/>
        <end position="378"/>
    </location>
</feature>
<feature type="helix" evidence="16">
    <location>
        <begin position="384"/>
        <end position="386"/>
    </location>
</feature>
<feature type="helix" evidence="15">
    <location>
        <begin position="387"/>
        <end position="393"/>
    </location>
</feature>
<feature type="helix" evidence="15">
    <location>
        <begin position="396"/>
        <end position="398"/>
    </location>
</feature>
<feature type="helix" evidence="15">
    <location>
        <begin position="406"/>
        <end position="417"/>
    </location>
</feature>
<feature type="turn" evidence="15">
    <location>
        <begin position="418"/>
        <end position="420"/>
    </location>
</feature>
<feature type="strand" evidence="15">
    <location>
        <begin position="422"/>
        <end position="431"/>
    </location>
</feature>
<feature type="strand" evidence="15">
    <location>
        <begin position="436"/>
        <end position="447"/>
    </location>
</feature>